<evidence type="ECO:0000250" key="1">
    <source>
        <dbReference type="UniProtKB" id="Q5M750"/>
    </source>
</evidence>
<evidence type="ECO:0000250" key="2">
    <source>
        <dbReference type="UniProtKB" id="Q9LDZ1"/>
    </source>
</evidence>
<evidence type="ECO:0000250" key="3">
    <source>
        <dbReference type="UniProtKB" id="Q9M9F0"/>
    </source>
</evidence>
<evidence type="ECO:0000256" key="4">
    <source>
        <dbReference type="SAM" id="MobiDB-lite"/>
    </source>
</evidence>
<evidence type="ECO:0000269" key="5">
    <source>
    </source>
</evidence>
<evidence type="ECO:0000303" key="6">
    <source>
    </source>
</evidence>
<evidence type="ECO:0000303" key="7">
    <source>
    </source>
</evidence>
<evidence type="ECO:0000305" key="8"/>
<organism>
    <name type="scientific">Arabidopsis thaliana</name>
    <name type="common">Mouse-ear cress</name>
    <dbReference type="NCBI Taxonomy" id="3702"/>
    <lineage>
        <taxon>Eukaryota</taxon>
        <taxon>Viridiplantae</taxon>
        <taxon>Streptophyta</taxon>
        <taxon>Embryophyta</taxon>
        <taxon>Tracheophyta</taxon>
        <taxon>Spermatophyta</taxon>
        <taxon>Magnoliopsida</taxon>
        <taxon>eudicotyledons</taxon>
        <taxon>Gunneridae</taxon>
        <taxon>Pentapetalae</taxon>
        <taxon>rosids</taxon>
        <taxon>malvids</taxon>
        <taxon>Brassicales</taxon>
        <taxon>Brassicaceae</taxon>
        <taxon>Camelineae</taxon>
        <taxon>Arabidopsis</taxon>
    </lineage>
</organism>
<protein>
    <recommendedName>
        <fullName evidence="6">VQ motif-containing protein 13</fullName>
        <shortName evidence="6">AtVQ13</shortName>
    </recommendedName>
    <alternativeName>
        <fullName evidence="7">MPK3/6-targeted VQ-motif-containing protein 2</fullName>
    </alternativeName>
</protein>
<dbReference type="EMBL" id="U78721">
    <property type="protein sequence ID" value="AAC69144.1"/>
    <property type="molecule type" value="Genomic_DNA"/>
</dbReference>
<dbReference type="EMBL" id="CP002685">
    <property type="protein sequence ID" value="AEC08884.1"/>
    <property type="molecule type" value="Genomic_DNA"/>
</dbReference>
<dbReference type="EMBL" id="AY102548">
    <property type="protein sequence ID" value="AAM76753.1"/>
    <property type="molecule type" value="mRNA"/>
</dbReference>
<dbReference type="EMBL" id="AY649267">
    <property type="protein sequence ID" value="AAT69184.1"/>
    <property type="molecule type" value="Genomic_DNA"/>
</dbReference>
<dbReference type="PIR" id="E84749">
    <property type="entry name" value="E84749"/>
</dbReference>
<dbReference type="RefSeq" id="NP_180934.1">
    <property type="nucleotide sequence ID" value="NM_128937.3"/>
</dbReference>
<dbReference type="SMR" id="O23660"/>
<dbReference type="STRING" id="3702.O23660"/>
<dbReference type="iPTMnet" id="O23660"/>
<dbReference type="PaxDb" id="3702-AT2G33780.1"/>
<dbReference type="EnsemblPlants" id="AT2G33780.1">
    <property type="protein sequence ID" value="AT2G33780.1"/>
    <property type="gene ID" value="AT2G33780"/>
</dbReference>
<dbReference type="GeneID" id="817945"/>
<dbReference type="Gramene" id="AT2G33780.1">
    <property type="protein sequence ID" value="AT2G33780.1"/>
    <property type="gene ID" value="AT2G33780"/>
</dbReference>
<dbReference type="KEGG" id="ath:AT2G33780"/>
<dbReference type="Araport" id="AT2G33780"/>
<dbReference type="TAIR" id="AT2G33780">
    <property type="gene designation" value="MVQ2"/>
</dbReference>
<dbReference type="eggNOG" id="ENOG502RIDK">
    <property type="taxonomic scope" value="Eukaryota"/>
</dbReference>
<dbReference type="HOGENOM" id="CLU_069496_0_0_1"/>
<dbReference type="InParanoid" id="O23660"/>
<dbReference type="PhylomeDB" id="O23660"/>
<dbReference type="PRO" id="PR:O23660"/>
<dbReference type="Proteomes" id="UP000006548">
    <property type="component" value="Chromosome 2"/>
</dbReference>
<dbReference type="ExpressionAtlas" id="O23660">
    <property type="expression patterns" value="baseline and differential"/>
</dbReference>
<dbReference type="GO" id="GO:0005634">
    <property type="term" value="C:nucleus"/>
    <property type="evidence" value="ECO:0007669"/>
    <property type="project" value="UniProtKB-SubCell"/>
</dbReference>
<dbReference type="InterPro" id="IPR008889">
    <property type="entry name" value="VQ"/>
</dbReference>
<dbReference type="InterPro" id="IPR039611">
    <property type="entry name" value="VQ_4/11/13/19/31/33"/>
</dbReference>
<dbReference type="PANTHER" id="PTHR33402">
    <property type="entry name" value="VQ MOTIF-CONTAINING PROTEIN 11-LIKE"/>
    <property type="match status" value="1"/>
</dbReference>
<dbReference type="PANTHER" id="PTHR33402:SF16">
    <property type="entry name" value="VQ MOTIF-CONTAINING PROTEIN 13-RELATED"/>
    <property type="match status" value="1"/>
</dbReference>
<dbReference type="Pfam" id="PF05678">
    <property type="entry name" value="VQ"/>
    <property type="match status" value="1"/>
</dbReference>
<proteinExistence type="evidence at protein level"/>
<feature type="chain" id="PRO_0000432313" description="VQ motif-containing protein 13">
    <location>
        <begin position="1"/>
        <end position="204"/>
    </location>
</feature>
<feature type="region of interest" description="Disordered" evidence="4">
    <location>
        <begin position="1"/>
        <end position="26"/>
    </location>
</feature>
<feature type="region of interest" description="Disordered" evidence="4">
    <location>
        <begin position="56"/>
        <end position="90"/>
    </location>
</feature>
<feature type="region of interest" description="Disordered" evidence="4">
    <location>
        <begin position="133"/>
        <end position="204"/>
    </location>
</feature>
<feature type="short sequence motif" description="VQ" evidence="8">
    <location>
        <begin position="46"/>
        <end position="55"/>
    </location>
</feature>
<feature type="compositionally biased region" description="Basic and acidic residues" evidence="4">
    <location>
        <begin position="1"/>
        <end position="12"/>
    </location>
</feature>
<feature type="compositionally biased region" description="Low complexity" evidence="4">
    <location>
        <begin position="16"/>
        <end position="26"/>
    </location>
</feature>
<feature type="compositionally biased region" description="Low complexity" evidence="4">
    <location>
        <begin position="143"/>
        <end position="152"/>
    </location>
</feature>
<feature type="modified residue" description="Phosphoserine" evidence="5">
    <location>
        <position position="17"/>
    </location>
</feature>
<feature type="modified residue" description="Phosphoserine" evidence="1">
    <location>
        <position position="73"/>
    </location>
</feature>
<feature type="modified residue" description="Phosphoserine" evidence="2">
    <location>
        <position position="128"/>
    </location>
</feature>
<feature type="modified residue" description="Phosphothreonine" evidence="2">
    <location>
        <position position="131"/>
    </location>
</feature>
<feature type="modified residue" description="Phosphoserine" evidence="1">
    <location>
        <position position="147"/>
    </location>
</feature>
<feature type="modified residue" description="Phosphoserine" evidence="1">
    <location>
        <position position="173"/>
    </location>
</feature>
<feature type="modified residue" description="Phosphothreonine" evidence="5">
    <location>
        <position position="177"/>
    </location>
</feature>
<feature type="modified residue" description="Phosphothreonine" evidence="5">
    <location>
        <position position="192"/>
    </location>
</feature>
<feature type="modified residue" description="Phosphoserine" evidence="5">
    <location>
        <position position="196"/>
    </location>
</feature>
<feature type="modified residue" description="Phosphoserine" evidence="5">
    <location>
        <position position="200"/>
    </location>
</feature>
<accession>O23660</accession>
<accession>Q8L8C3</accession>
<name>VQ13_ARATH</name>
<keyword id="KW-0539">Nucleus</keyword>
<keyword id="KW-0597">Phosphoprotein</keyword>
<keyword id="KW-1185">Reference proteome</keyword>
<gene>
    <name evidence="6" type="primary">VQ13</name>
    <name evidence="7" type="synonym">MVQ2</name>
    <name type="ordered locus">At2g33780</name>
</gene>
<comment type="function">
    <text evidence="3">May modulate WRKY transcription factor activities.</text>
</comment>
<comment type="subcellular location">
    <subcellularLocation>
        <location evidence="3">Nucleus</location>
    </subcellularLocation>
</comment>
<comment type="PTM">
    <text evidence="5">Phosphorylated on serine and threonine residues by MPK6.</text>
</comment>
<sequence>MEKSPRYRDKAKNLLPSPSSCTTTPTRYVKDDMYETTFIRTDPSSFKQVVQLLTGIPKNPTHQPDPRFPPFHSIPPIKAVTNKKQSSSFRLSERRNSMKHYLNINPTHSGPPEILTPTILNFPALDLSPDTPLMSDPFYRPGSFSQSPSDSKPSFDDDQERSIKEKGFYLRPSPSTTPRDTEPRLLSLFPMTPIHSPAPSPHDH</sequence>
<reference key="1">
    <citation type="journal article" date="1999" name="Nature">
        <title>Sequence and analysis of chromosome 2 of the plant Arabidopsis thaliana.</title>
        <authorList>
            <person name="Lin X."/>
            <person name="Kaul S."/>
            <person name="Rounsley S.D."/>
            <person name="Shea T.P."/>
            <person name="Benito M.-I."/>
            <person name="Town C.D."/>
            <person name="Fujii C.Y."/>
            <person name="Mason T.M."/>
            <person name="Bowman C.L."/>
            <person name="Barnstead M.E."/>
            <person name="Feldblyum T.V."/>
            <person name="Buell C.R."/>
            <person name="Ketchum K.A."/>
            <person name="Lee J.J."/>
            <person name="Ronning C.M."/>
            <person name="Koo H.L."/>
            <person name="Moffat K.S."/>
            <person name="Cronin L.A."/>
            <person name="Shen M."/>
            <person name="Pai G."/>
            <person name="Van Aken S."/>
            <person name="Umayam L."/>
            <person name="Tallon L.J."/>
            <person name="Gill J.E."/>
            <person name="Adams M.D."/>
            <person name="Carrera A.J."/>
            <person name="Creasy T.H."/>
            <person name="Goodman H.M."/>
            <person name="Somerville C.R."/>
            <person name="Copenhaver G.P."/>
            <person name="Preuss D."/>
            <person name="Nierman W.C."/>
            <person name="White O."/>
            <person name="Eisen J.A."/>
            <person name="Salzberg S.L."/>
            <person name="Fraser C.M."/>
            <person name="Venter J.C."/>
        </authorList>
    </citation>
    <scope>NUCLEOTIDE SEQUENCE [LARGE SCALE GENOMIC DNA]</scope>
    <source>
        <strain>cv. Columbia</strain>
    </source>
</reference>
<reference key="2">
    <citation type="journal article" date="2017" name="Plant J.">
        <title>Araport11: a complete reannotation of the Arabidopsis thaliana reference genome.</title>
        <authorList>
            <person name="Cheng C.Y."/>
            <person name="Krishnakumar V."/>
            <person name="Chan A.P."/>
            <person name="Thibaud-Nissen F."/>
            <person name="Schobel S."/>
            <person name="Town C.D."/>
        </authorList>
    </citation>
    <scope>GENOME REANNOTATION</scope>
    <source>
        <strain>cv. Columbia</strain>
    </source>
</reference>
<reference key="3">
    <citation type="journal article" date="2002" name="Plant Physiol.">
        <title>Cloning and sequencing of cDNAs for hypothetical genes from chromosome 2 of Arabidopsis.</title>
        <authorList>
            <person name="Xiao Y.-L."/>
            <person name="Malik M."/>
            <person name="Whitelaw C.A."/>
            <person name="Town C.D."/>
        </authorList>
    </citation>
    <scope>NUCLEOTIDE SEQUENCE [LARGE SCALE MRNA]</scope>
    <source>
        <strain>cv. Columbia</strain>
    </source>
</reference>
<reference key="4">
    <citation type="submission" date="2004-06" db="EMBL/GenBank/DDBJ databases">
        <authorList>
            <person name="Underwood B.A."/>
            <person name="Xiao Y.-L."/>
            <person name="Moskal W.A. Jr."/>
            <person name="Monaghan E.L."/>
            <person name="Wang W."/>
            <person name="Redman J.C."/>
            <person name="Wu H.C."/>
            <person name="Utterback T."/>
            <person name="Town C.D."/>
        </authorList>
    </citation>
    <scope>NUCLEOTIDE SEQUENCE [LARGE SCALE GENOMIC DNA]</scope>
    <source>
        <strain>cv. Columbia</strain>
    </source>
</reference>
<reference key="5">
    <citation type="journal article" date="2012" name="Plant Physiol.">
        <title>Structural and functional analysis of VQ motif-containing proteins in Arabidopsis as interacting proteins of WRKY transcription factors.</title>
        <authorList>
            <person name="Cheng Y."/>
            <person name="Zhou Y."/>
            <person name="Yang Y."/>
            <person name="Chi Y.J."/>
            <person name="Zhou J."/>
            <person name="Chen J.Y."/>
            <person name="Wang F."/>
            <person name="Fan B."/>
            <person name="Shi K."/>
            <person name="Zhou Y.H."/>
            <person name="Yu J.Q."/>
            <person name="Chen Z."/>
        </authorList>
    </citation>
    <scope>GENE FAMILY</scope>
    <scope>NOMENCLATURE</scope>
</reference>
<reference key="6">
    <citation type="journal article" date="2014" name="New Phytol.">
        <title>The Arabidopsis thaliana mitogen-activated protein kinases MPK3 and MPK6 target a subclass of 'VQ-motif'-containing proteins to regulate immune responses.</title>
        <authorList>
            <person name="Pecher P."/>
            <person name="Eschen-Lippold L."/>
            <person name="Herklotz S."/>
            <person name="Kuhle K."/>
            <person name="Naumann K."/>
            <person name="Bethke G."/>
            <person name="Uhrig J."/>
            <person name="Weyhe M."/>
            <person name="Scheel D."/>
            <person name="Lee J."/>
        </authorList>
    </citation>
    <scope>IDENTIFICATION BY MASS SPECTROMETRY</scope>
    <scope>PHOSPHORYLATION AT SER-17; THR-177; THR-192; SER-196 AND SER-200</scope>
</reference>